<proteinExistence type="inferred from homology"/>
<name>RS16_ACIAD</name>
<protein>
    <recommendedName>
        <fullName evidence="1">Small ribosomal subunit protein bS16</fullName>
    </recommendedName>
    <alternativeName>
        <fullName evidence="2">30S ribosomal protein S16</fullName>
    </alternativeName>
</protein>
<sequence>MVVIRLARGGAKKRPFYQIVVTDSRNARDGRFIERIGFFNPTAQGQAEKLRLDADRFAHWVSQGAQPSERVASLAAQAKKAATAA</sequence>
<dbReference type="EMBL" id="CR543861">
    <property type="protein sequence ID" value="CAG69986.1"/>
    <property type="molecule type" value="Genomic_DNA"/>
</dbReference>
<dbReference type="RefSeq" id="WP_004923845.1">
    <property type="nucleotide sequence ID" value="NC_005966.1"/>
</dbReference>
<dbReference type="SMR" id="Q6F7H9"/>
<dbReference type="STRING" id="202950.GCA_001485005_02157"/>
<dbReference type="GeneID" id="66211143"/>
<dbReference type="KEGG" id="aci:ACIAD3313"/>
<dbReference type="eggNOG" id="COG0228">
    <property type="taxonomic scope" value="Bacteria"/>
</dbReference>
<dbReference type="HOGENOM" id="CLU_100590_5_1_6"/>
<dbReference type="OrthoDB" id="9807878at2"/>
<dbReference type="BioCyc" id="ASP62977:ACIAD_RS14995-MONOMER"/>
<dbReference type="Proteomes" id="UP000000430">
    <property type="component" value="Chromosome"/>
</dbReference>
<dbReference type="GO" id="GO:0005737">
    <property type="term" value="C:cytoplasm"/>
    <property type="evidence" value="ECO:0007669"/>
    <property type="project" value="UniProtKB-ARBA"/>
</dbReference>
<dbReference type="GO" id="GO:0015935">
    <property type="term" value="C:small ribosomal subunit"/>
    <property type="evidence" value="ECO:0007669"/>
    <property type="project" value="TreeGrafter"/>
</dbReference>
<dbReference type="GO" id="GO:0003735">
    <property type="term" value="F:structural constituent of ribosome"/>
    <property type="evidence" value="ECO:0007669"/>
    <property type="project" value="InterPro"/>
</dbReference>
<dbReference type="GO" id="GO:0006412">
    <property type="term" value="P:translation"/>
    <property type="evidence" value="ECO:0007669"/>
    <property type="project" value="UniProtKB-UniRule"/>
</dbReference>
<dbReference type="FunFam" id="3.30.1320.10:FF:000001">
    <property type="entry name" value="30S ribosomal protein S16"/>
    <property type="match status" value="1"/>
</dbReference>
<dbReference type="Gene3D" id="3.30.1320.10">
    <property type="match status" value="1"/>
</dbReference>
<dbReference type="HAMAP" id="MF_00385">
    <property type="entry name" value="Ribosomal_bS16"/>
    <property type="match status" value="1"/>
</dbReference>
<dbReference type="InterPro" id="IPR000307">
    <property type="entry name" value="Ribosomal_bS16"/>
</dbReference>
<dbReference type="InterPro" id="IPR020592">
    <property type="entry name" value="Ribosomal_bS16_CS"/>
</dbReference>
<dbReference type="InterPro" id="IPR023803">
    <property type="entry name" value="Ribosomal_bS16_dom_sf"/>
</dbReference>
<dbReference type="NCBIfam" id="TIGR00002">
    <property type="entry name" value="S16"/>
    <property type="match status" value="1"/>
</dbReference>
<dbReference type="PANTHER" id="PTHR12919">
    <property type="entry name" value="30S RIBOSOMAL PROTEIN S16"/>
    <property type="match status" value="1"/>
</dbReference>
<dbReference type="PANTHER" id="PTHR12919:SF20">
    <property type="entry name" value="SMALL RIBOSOMAL SUBUNIT PROTEIN BS16M"/>
    <property type="match status" value="1"/>
</dbReference>
<dbReference type="Pfam" id="PF00886">
    <property type="entry name" value="Ribosomal_S16"/>
    <property type="match status" value="1"/>
</dbReference>
<dbReference type="SUPFAM" id="SSF54565">
    <property type="entry name" value="Ribosomal protein S16"/>
    <property type="match status" value="1"/>
</dbReference>
<dbReference type="PROSITE" id="PS00732">
    <property type="entry name" value="RIBOSOMAL_S16"/>
    <property type="match status" value="1"/>
</dbReference>
<feature type="chain" id="PRO_0000243765" description="Small ribosomal subunit protein bS16">
    <location>
        <begin position="1"/>
        <end position="85"/>
    </location>
</feature>
<evidence type="ECO:0000255" key="1">
    <source>
        <dbReference type="HAMAP-Rule" id="MF_00385"/>
    </source>
</evidence>
<evidence type="ECO:0000305" key="2"/>
<accession>Q6F7H9</accession>
<organism>
    <name type="scientific">Acinetobacter baylyi (strain ATCC 33305 / BD413 / ADP1)</name>
    <dbReference type="NCBI Taxonomy" id="62977"/>
    <lineage>
        <taxon>Bacteria</taxon>
        <taxon>Pseudomonadati</taxon>
        <taxon>Pseudomonadota</taxon>
        <taxon>Gammaproteobacteria</taxon>
        <taxon>Moraxellales</taxon>
        <taxon>Moraxellaceae</taxon>
        <taxon>Acinetobacter</taxon>
    </lineage>
</organism>
<reference key="1">
    <citation type="journal article" date="2004" name="Nucleic Acids Res.">
        <title>Unique features revealed by the genome sequence of Acinetobacter sp. ADP1, a versatile and naturally transformation competent bacterium.</title>
        <authorList>
            <person name="Barbe V."/>
            <person name="Vallenet D."/>
            <person name="Fonknechten N."/>
            <person name="Kreimeyer A."/>
            <person name="Oztas S."/>
            <person name="Labarre L."/>
            <person name="Cruveiller S."/>
            <person name="Robert C."/>
            <person name="Duprat S."/>
            <person name="Wincker P."/>
            <person name="Ornston L.N."/>
            <person name="Weissenbach J."/>
            <person name="Marliere P."/>
            <person name="Cohen G.N."/>
            <person name="Medigue C."/>
        </authorList>
    </citation>
    <scope>NUCLEOTIDE SEQUENCE [LARGE SCALE GENOMIC DNA]</scope>
    <source>
        <strain>ATCC 33305 / BD413 / ADP1</strain>
    </source>
</reference>
<comment type="similarity">
    <text evidence="1">Belongs to the bacterial ribosomal protein bS16 family.</text>
</comment>
<keyword id="KW-0687">Ribonucleoprotein</keyword>
<keyword id="KW-0689">Ribosomal protein</keyword>
<gene>
    <name evidence="1" type="primary">rpsP</name>
    <name type="ordered locus">ACIAD3313</name>
</gene>